<evidence type="ECO:0000255" key="1">
    <source>
        <dbReference type="HAMAP-Rule" id="MF_01703"/>
    </source>
</evidence>
<dbReference type="EC" id="7.5.2.6" evidence="1"/>
<dbReference type="EMBL" id="BX571965">
    <property type="protein sequence ID" value="CAH35111.1"/>
    <property type="molecule type" value="Genomic_DNA"/>
</dbReference>
<dbReference type="RefSeq" id="WP_004186431.1">
    <property type="nucleotide sequence ID" value="NZ_CP009538.1"/>
</dbReference>
<dbReference type="RefSeq" id="YP_107739.1">
    <property type="nucleotide sequence ID" value="NC_006350.1"/>
</dbReference>
<dbReference type="SMR" id="Q63VX7"/>
<dbReference type="STRING" id="272560.BPSL1118"/>
<dbReference type="GeneID" id="93059617"/>
<dbReference type="KEGG" id="bps:BPSL1118"/>
<dbReference type="PATRIC" id="fig|272560.51.peg.430"/>
<dbReference type="eggNOG" id="COG1132">
    <property type="taxonomic scope" value="Bacteria"/>
</dbReference>
<dbReference type="Proteomes" id="UP000000605">
    <property type="component" value="Chromosome 1"/>
</dbReference>
<dbReference type="GO" id="GO:0005886">
    <property type="term" value="C:plasma membrane"/>
    <property type="evidence" value="ECO:0007669"/>
    <property type="project" value="UniProtKB-SubCell"/>
</dbReference>
<dbReference type="GO" id="GO:0015421">
    <property type="term" value="F:ABC-type oligopeptide transporter activity"/>
    <property type="evidence" value="ECO:0007669"/>
    <property type="project" value="TreeGrafter"/>
</dbReference>
<dbReference type="GO" id="GO:0005524">
    <property type="term" value="F:ATP binding"/>
    <property type="evidence" value="ECO:0007669"/>
    <property type="project" value="UniProtKB-KW"/>
</dbReference>
<dbReference type="GO" id="GO:0016887">
    <property type="term" value="F:ATP hydrolysis activity"/>
    <property type="evidence" value="ECO:0007669"/>
    <property type="project" value="InterPro"/>
</dbReference>
<dbReference type="GO" id="GO:0034040">
    <property type="term" value="F:ATPase-coupled lipid transmembrane transporter activity"/>
    <property type="evidence" value="ECO:0007669"/>
    <property type="project" value="InterPro"/>
</dbReference>
<dbReference type="CDD" id="cd18552">
    <property type="entry name" value="ABC_6TM_MsbA_like"/>
    <property type="match status" value="1"/>
</dbReference>
<dbReference type="FunFam" id="3.40.50.300:FF:000221">
    <property type="entry name" value="Multidrug ABC transporter ATP-binding protein"/>
    <property type="match status" value="1"/>
</dbReference>
<dbReference type="Gene3D" id="1.20.1560.10">
    <property type="entry name" value="ABC transporter type 1, transmembrane domain"/>
    <property type="match status" value="1"/>
</dbReference>
<dbReference type="Gene3D" id="3.40.50.300">
    <property type="entry name" value="P-loop containing nucleotide triphosphate hydrolases"/>
    <property type="match status" value="1"/>
</dbReference>
<dbReference type="InterPro" id="IPR003593">
    <property type="entry name" value="AAA+_ATPase"/>
</dbReference>
<dbReference type="InterPro" id="IPR011527">
    <property type="entry name" value="ABC1_TM_dom"/>
</dbReference>
<dbReference type="InterPro" id="IPR036640">
    <property type="entry name" value="ABC1_TM_sf"/>
</dbReference>
<dbReference type="InterPro" id="IPR003439">
    <property type="entry name" value="ABC_transporter-like_ATP-bd"/>
</dbReference>
<dbReference type="InterPro" id="IPR017871">
    <property type="entry name" value="ABC_transporter-like_CS"/>
</dbReference>
<dbReference type="InterPro" id="IPR011917">
    <property type="entry name" value="ABC_transpr_lipidA"/>
</dbReference>
<dbReference type="InterPro" id="IPR027417">
    <property type="entry name" value="P-loop_NTPase"/>
</dbReference>
<dbReference type="InterPro" id="IPR039421">
    <property type="entry name" value="Type_1_exporter"/>
</dbReference>
<dbReference type="NCBIfam" id="TIGR02203">
    <property type="entry name" value="MsbA_lipidA"/>
    <property type="match status" value="1"/>
</dbReference>
<dbReference type="PANTHER" id="PTHR43394:SF1">
    <property type="entry name" value="ATP-BINDING CASSETTE SUB-FAMILY B MEMBER 10, MITOCHONDRIAL"/>
    <property type="match status" value="1"/>
</dbReference>
<dbReference type="PANTHER" id="PTHR43394">
    <property type="entry name" value="ATP-DEPENDENT PERMEASE MDL1, MITOCHONDRIAL"/>
    <property type="match status" value="1"/>
</dbReference>
<dbReference type="Pfam" id="PF00664">
    <property type="entry name" value="ABC_membrane"/>
    <property type="match status" value="1"/>
</dbReference>
<dbReference type="Pfam" id="PF00005">
    <property type="entry name" value="ABC_tran"/>
    <property type="match status" value="1"/>
</dbReference>
<dbReference type="SMART" id="SM00382">
    <property type="entry name" value="AAA"/>
    <property type="match status" value="1"/>
</dbReference>
<dbReference type="SUPFAM" id="SSF90123">
    <property type="entry name" value="ABC transporter transmembrane region"/>
    <property type="match status" value="1"/>
</dbReference>
<dbReference type="SUPFAM" id="SSF52540">
    <property type="entry name" value="P-loop containing nucleoside triphosphate hydrolases"/>
    <property type="match status" value="1"/>
</dbReference>
<dbReference type="PROSITE" id="PS50929">
    <property type="entry name" value="ABC_TM1F"/>
    <property type="match status" value="1"/>
</dbReference>
<dbReference type="PROSITE" id="PS00211">
    <property type="entry name" value="ABC_TRANSPORTER_1"/>
    <property type="match status" value="1"/>
</dbReference>
<dbReference type="PROSITE" id="PS50893">
    <property type="entry name" value="ABC_TRANSPORTER_2"/>
    <property type="match status" value="1"/>
</dbReference>
<dbReference type="PROSITE" id="PS51239">
    <property type="entry name" value="MSBA"/>
    <property type="match status" value="1"/>
</dbReference>
<feature type="chain" id="PRO_0000092572" description="ATP-dependent lipid A-core flippase">
    <location>
        <begin position="1"/>
        <end position="596"/>
    </location>
</feature>
<feature type="transmembrane region" description="Helical" evidence="1">
    <location>
        <begin position="34"/>
        <end position="54"/>
    </location>
</feature>
<feature type="transmembrane region" description="Helical" evidence="1">
    <location>
        <begin position="80"/>
        <end position="100"/>
    </location>
</feature>
<feature type="transmembrane region" description="Helical" evidence="1">
    <location>
        <begin position="138"/>
        <end position="158"/>
    </location>
</feature>
<feature type="transmembrane region" description="Helical" evidence="1">
    <location>
        <begin position="164"/>
        <end position="184"/>
    </location>
</feature>
<feature type="transmembrane region" description="Helical" evidence="1">
    <location>
        <begin position="263"/>
        <end position="283"/>
    </location>
</feature>
<feature type="transmembrane region" description="Helical" evidence="1">
    <location>
        <begin position="292"/>
        <end position="312"/>
    </location>
</feature>
<feature type="domain" description="ABC transmembrane type-1" evidence="1">
    <location>
        <begin position="38"/>
        <end position="321"/>
    </location>
</feature>
<feature type="domain" description="ABC transporter" evidence="1">
    <location>
        <begin position="353"/>
        <end position="589"/>
    </location>
</feature>
<feature type="binding site" evidence="1">
    <location>
        <begin position="389"/>
        <end position="396"/>
    </location>
    <ligand>
        <name>ATP</name>
        <dbReference type="ChEBI" id="CHEBI:30616"/>
    </ligand>
</feature>
<proteinExistence type="inferred from homology"/>
<protein>
    <recommendedName>
        <fullName evidence="1">ATP-dependent lipid A-core flippase</fullName>
        <ecNumber evidence="1">7.5.2.6</ecNumber>
    </recommendedName>
    <alternativeName>
        <fullName evidence="1">Lipid A export ATP-binding/permease protein MsbA</fullName>
    </alternativeName>
</protein>
<keyword id="KW-0067">ATP-binding</keyword>
<keyword id="KW-0997">Cell inner membrane</keyword>
<keyword id="KW-1003">Cell membrane</keyword>
<keyword id="KW-0445">Lipid transport</keyword>
<keyword id="KW-0472">Membrane</keyword>
<keyword id="KW-0547">Nucleotide-binding</keyword>
<keyword id="KW-1185">Reference proteome</keyword>
<keyword id="KW-1278">Translocase</keyword>
<keyword id="KW-0812">Transmembrane</keyword>
<keyword id="KW-1133">Transmembrane helix</keyword>
<keyword id="KW-0813">Transport</keyword>
<sequence length="596" mass="64839">MSVKPTLSKPIGGQDASSPAVVMRRLWPYVKPLVWVLVAGVLAMAAVAATEAGIPALLKPLLDHGFGSKGDMTTKLYVPAAVVGLALARAIAQYASGYLLQYVSNRILLDLRIQMFERMIHTGVSFFQRETASTVINAVVFEVNQVLSVLMGVTITLVRDSLTVVFLLGYLFYLNWRLTLIVAILLPCIGWLVGKINRRLRRLNREHQTLTNQLAYIVEETVGGYKVVKVHNGEPYEIGRFNELSRKLRGYSMRMTVSGGLAQPLTQFLASIALAVVLTIAVVQSANDQTTVGGFVAFVTAMLLIISPLKHLMDVNQPLQRGMTAAELIFGLIDEPREPEGGGKPLARASGAIEFSHVSFSYGMSRDGRQTLDDVSFTVAPGEMVALAGPSGSGKTTLVNLLPRFFDPSSGSVRVDGVALPEYSLRDLRNQIAMVSQDVVLFNDTIAANVAYGQAPERDRVEAALRAANLWETVTAMPDGIDTLVGDNGMRLSGGQRQRLAIARAIYKDAPILILDEATSALDSESERHVQAALETLMKGRTTLVIAHRLSTIERADRILVLEGGKIVESGSHRELLEQGGLYAHLHRIQFQQDAG</sequence>
<comment type="function">
    <text evidence="1">Involved in lipopolysaccharide (LPS) biosynthesis. Translocates lipid A-core from the inner to the outer leaflet of the inner membrane. Transmembrane domains (TMD) form a pore in the inner membrane and the ATP-binding domain (NBD) is responsible for energy generation.</text>
</comment>
<comment type="catalytic activity">
    <reaction evidence="1">
        <text>ATP + H2O + lipid A-core oligosaccharideSide 1 = ADP + phosphate + lipid A-core oligosaccharideSide 2.</text>
        <dbReference type="EC" id="7.5.2.6"/>
    </reaction>
</comment>
<comment type="subunit">
    <text evidence="1">Homodimer.</text>
</comment>
<comment type="subcellular location">
    <subcellularLocation>
        <location evidence="1">Cell inner membrane</location>
        <topology evidence="1">Multi-pass membrane protein</topology>
    </subcellularLocation>
</comment>
<comment type="domain">
    <text evidence="1">In MsbA the ATP-binding domain (NBD) and the transmembrane domain (TMD) are fused.</text>
</comment>
<comment type="similarity">
    <text evidence="1">Belongs to the ABC transporter superfamily. Lipid exporter (TC 3.A.1.106) family.</text>
</comment>
<name>MSBA_BURPS</name>
<organism>
    <name type="scientific">Burkholderia pseudomallei (strain K96243)</name>
    <dbReference type="NCBI Taxonomy" id="272560"/>
    <lineage>
        <taxon>Bacteria</taxon>
        <taxon>Pseudomonadati</taxon>
        <taxon>Pseudomonadota</taxon>
        <taxon>Betaproteobacteria</taxon>
        <taxon>Burkholderiales</taxon>
        <taxon>Burkholderiaceae</taxon>
        <taxon>Burkholderia</taxon>
        <taxon>pseudomallei group</taxon>
    </lineage>
</organism>
<accession>Q63VX7</accession>
<reference key="1">
    <citation type="journal article" date="2004" name="Proc. Natl. Acad. Sci. U.S.A.">
        <title>Genomic plasticity of the causative agent of melioidosis, Burkholderia pseudomallei.</title>
        <authorList>
            <person name="Holden M.T.G."/>
            <person name="Titball R.W."/>
            <person name="Peacock S.J."/>
            <person name="Cerdeno-Tarraga A.-M."/>
            <person name="Atkins T."/>
            <person name="Crossman L.C."/>
            <person name="Pitt T."/>
            <person name="Churcher C."/>
            <person name="Mungall K.L."/>
            <person name="Bentley S.D."/>
            <person name="Sebaihia M."/>
            <person name="Thomson N.R."/>
            <person name="Bason N."/>
            <person name="Beacham I.R."/>
            <person name="Brooks K."/>
            <person name="Brown K.A."/>
            <person name="Brown N.F."/>
            <person name="Challis G.L."/>
            <person name="Cherevach I."/>
            <person name="Chillingworth T."/>
            <person name="Cronin A."/>
            <person name="Crossett B."/>
            <person name="Davis P."/>
            <person name="DeShazer D."/>
            <person name="Feltwell T."/>
            <person name="Fraser A."/>
            <person name="Hance Z."/>
            <person name="Hauser H."/>
            <person name="Holroyd S."/>
            <person name="Jagels K."/>
            <person name="Keith K.E."/>
            <person name="Maddison M."/>
            <person name="Moule S."/>
            <person name="Price C."/>
            <person name="Quail M.A."/>
            <person name="Rabbinowitsch E."/>
            <person name="Rutherford K."/>
            <person name="Sanders M."/>
            <person name="Simmonds M."/>
            <person name="Songsivilai S."/>
            <person name="Stevens K."/>
            <person name="Tumapa S."/>
            <person name="Vesaratchavest M."/>
            <person name="Whitehead S."/>
            <person name="Yeats C."/>
            <person name="Barrell B.G."/>
            <person name="Oyston P.C.F."/>
            <person name="Parkhill J."/>
        </authorList>
    </citation>
    <scope>NUCLEOTIDE SEQUENCE [LARGE SCALE GENOMIC DNA]</scope>
    <source>
        <strain>K96243</strain>
    </source>
</reference>
<gene>
    <name evidence="1" type="primary">msbA</name>
    <name type="ordered locus">BPSL1118</name>
</gene>